<name>RNH2_BURMA</name>
<sequence>MATTRKPRGGAGGATQPALDFDAPGEIVCGVDEAGRGPLAGPVVAAAVVLDPARPIVGLDDSKALSAKKRERLFDEIVAYALAYSVASASVEEIDSLNILHATMLAMKRAVEGLSVLPTLAKIDGNRCPMLAIRSEAIVGGDALVPSISAASILAKVTRDRMLVELHQQFPMYGFDAHAGYGTPQHLAALREHGPCEHHRRSFAPVREAFDLIR</sequence>
<accession>Q62JD8</accession>
<organism>
    <name type="scientific">Burkholderia mallei (strain ATCC 23344)</name>
    <dbReference type="NCBI Taxonomy" id="243160"/>
    <lineage>
        <taxon>Bacteria</taxon>
        <taxon>Pseudomonadati</taxon>
        <taxon>Pseudomonadota</taxon>
        <taxon>Betaproteobacteria</taxon>
        <taxon>Burkholderiales</taxon>
        <taxon>Burkholderiaceae</taxon>
        <taxon>Burkholderia</taxon>
        <taxon>pseudomallei group</taxon>
    </lineage>
</organism>
<feature type="chain" id="PRO_0000235705" description="Ribonuclease HII">
    <location>
        <begin position="1"/>
        <end position="214"/>
    </location>
</feature>
<feature type="domain" description="RNase H type-2" evidence="2">
    <location>
        <begin position="26"/>
        <end position="214"/>
    </location>
</feature>
<feature type="binding site" evidence="1">
    <location>
        <position position="32"/>
    </location>
    <ligand>
        <name>a divalent metal cation</name>
        <dbReference type="ChEBI" id="CHEBI:60240"/>
    </ligand>
</feature>
<feature type="binding site" evidence="1">
    <location>
        <position position="33"/>
    </location>
    <ligand>
        <name>a divalent metal cation</name>
        <dbReference type="ChEBI" id="CHEBI:60240"/>
    </ligand>
</feature>
<feature type="binding site" evidence="1">
    <location>
        <position position="124"/>
    </location>
    <ligand>
        <name>a divalent metal cation</name>
        <dbReference type="ChEBI" id="CHEBI:60240"/>
    </ligand>
</feature>
<proteinExistence type="inferred from homology"/>
<protein>
    <recommendedName>
        <fullName evidence="1">Ribonuclease HII</fullName>
        <shortName evidence="1">RNase HII</shortName>
        <ecNumber evidence="1">3.1.26.4</ecNumber>
    </recommendedName>
</protein>
<evidence type="ECO:0000255" key="1">
    <source>
        <dbReference type="HAMAP-Rule" id="MF_00052"/>
    </source>
</evidence>
<evidence type="ECO:0000255" key="2">
    <source>
        <dbReference type="PROSITE-ProRule" id="PRU01319"/>
    </source>
</evidence>
<gene>
    <name evidence="1" type="primary">rnhB</name>
    <name type="ordered locus">BMA1541</name>
</gene>
<dbReference type="EC" id="3.1.26.4" evidence="1"/>
<dbReference type="EMBL" id="CP000010">
    <property type="protein sequence ID" value="AAU47741.1"/>
    <property type="molecule type" value="Genomic_DNA"/>
</dbReference>
<dbReference type="RefSeq" id="WP_004191384.1">
    <property type="nucleotide sequence ID" value="NC_006348.1"/>
</dbReference>
<dbReference type="RefSeq" id="YP_103181.1">
    <property type="nucleotide sequence ID" value="NC_006348.1"/>
</dbReference>
<dbReference type="SMR" id="Q62JD8"/>
<dbReference type="GeneID" id="92979267"/>
<dbReference type="KEGG" id="bma:BMA1541"/>
<dbReference type="PATRIC" id="fig|243160.12.peg.1585"/>
<dbReference type="eggNOG" id="COG0164">
    <property type="taxonomic scope" value="Bacteria"/>
</dbReference>
<dbReference type="HOGENOM" id="CLU_036532_3_2_4"/>
<dbReference type="Proteomes" id="UP000006693">
    <property type="component" value="Chromosome 1"/>
</dbReference>
<dbReference type="GO" id="GO:0005737">
    <property type="term" value="C:cytoplasm"/>
    <property type="evidence" value="ECO:0007669"/>
    <property type="project" value="UniProtKB-SubCell"/>
</dbReference>
<dbReference type="GO" id="GO:0032299">
    <property type="term" value="C:ribonuclease H2 complex"/>
    <property type="evidence" value="ECO:0007669"/>
    <property type="project" value="TreeGrafter"/>
</dbReference>
<dbReference type="GO" id="GO:0030145">
    <property type="term" value="F:manganese ion binding"/>
    <property type="evidence" value="ECO:0007669"/>
    <property type="project" value="UniProtKB-UniRule"/>
</dbReference>
<dbReference type="GO" id="GO:0003723">
    <property type="term" value="F:RNA binding"/>
    <property type="evidence" value="ECO:0007669"/>
    <property type="project" value="InterPro"/>
</dbReference>
<dbReference type="GO" id="GO:0004523">
    <property type="term" value="F:RNA-DNA hybrid ribonuclease activity"/>
    <property type="evidence" value="ECO:0007669"/>
    <property type="project" value="UniProtKB-UniRule"/>
</dbReference>
<dbReference type="GO" id="GO:0043137">
    <property type="term" value="P:DNA replication, removal of RNA primer"/>
    <property type="evidence" value="ECO:0007669"/>
    <property type="project" value="TreeGrafter"/>
</dbReference>
<dbReference type="GO" id="GO:0006298">
    <property type="term" value="P:mismatch repair"/>
    <property type="evidence" value="ECO:0007669"/>
    <property type="project" value="TreeGrafter"/>
</dbReference>
<dbReference type="CDD" id="cd07182">
    <property type="entry name" value="RNase_HII_bacteria_HII_like"/>
    <property type="match status" value="1"/>
</dbReference>
<dbReference type="FunFam" id="3.30.420.10:FF:000006">
    <property type="entry name" value="Ribonuclease HII"/>
    <property type="match status" value="1"/>
</dbReference>
<dbReference type="Gene3D" id="3.30.420.10">
    <property type="entry name" value="Ribonuclease H-like superfamily/Ribonuclease H"/>
    <property type="match status" value="1"/>
</dbReference>
<dbReference type="HAMAP" id="MF_00052_B">
    <property type="entry name" value="RNase_HII_B"/>
    <property type="match status" value="1"/>
</dbReference>
<dbReference type="InterPro" id="IPR022898">
    <property type="entry name" value="RNase_HII"/>
</dbReference>
<dbReference type="InterPro" id="IPR001352">
    <property type="entry name" value="RNase_HII/HIII"/>
</dbReference>
<dbReference type="InterPro" id="IPR024567">
    <property type="entry name" value="RNase_HII/HIII_dom"/>
</dbReference>
<dbReference type="InterPro" id="IPR012337">
    <property type="entry name" value="RNaseH-like_sf"/>
</dbReference>
<dbReference type="InterPro" id="IPR036397">
    <property type="entry name" value="RNaseH_sf"/>
</dbReference>
<dbReference type="NCBIfam" id="NF000594">
    <property type="entry name" value="PRK00015.1-1"/>
    <property type="match status" value="1"/>
</dbReference>
<dbReference type="NCBIfam" id="NF000595">
    <property type="entry name" value="PRK00015.1-3"/>
    <property type="match status" value="1"/>
</dbReference>
<dbReference type="NCBIfam" id="NF000596">
    <property type="entry name" value="PRK00015.1-4"/>
    <property type="match status" value="1"/>
</dbReference>
<dbReference type="PANTHER" id="PTHR10954">
    <property type="entry name" value="RIBONUCLEASE H2 SUBUNIT A"/>
    <property type="match status" value="1"/>
</dbReference>
<dbReference type="PANTHER" id="PTHR10954:SF18">
    <property type="entry name" value="RIBONUCLEASE HII"/>
    <property type="match status" value="1"/>
</dbReference>
<dbReference type="Pfam" id="PF01351">
    <property type="entry name" value="RNase_HII"/>
    <property type="match status" value="1"/>
</dbReference>
<dbReference type="SUPFAM" id="SSF53098">
    <property type="entry name" value="Ribonuclease H-like"/>
    <property type="match status" value="1"/>
</dbReference>
<dbReference type="PROSITE" id="PS51975">
    <property type="entry name" value="RNASE_H_2"/>
    <property type="match status" value="1"/>
</dbReference>
<keyword id="KW-0963">Cytoplasm</keyword>
<keyword id="KW-0255">Endonuclease</keyword>
<keyword id="KW-0378">Hydrolase</keyword>
<keyword id="KW-0464">Manganese</keyword>
<keyword id="KW-0479">Metal-binding</keyword>
<keyword id="KW-0540">Nuclease</keyword>
<keyword id="KW-1185">Reference proteome</keyword>
<reference key="1">
    <citation type="journal article" date="2004" name="Proc. Natl. Acad. Sci. U.S.A.">
        <title>Structural flexibility in the Burkholderia mallei genome.</title>
        <authorList>
            <person name="Nierman W.C."/>
            <person name="DeShazer D."/>
            <person name="Kim H.S."/>
            <person name="Tettelin H."/>
            <person name="Nelson K.E."/>
            <person name="Feldblyum T.V."/>
            <person name="Ulrich R.L."/>
            <person name="Ronning C.M."/>
            <person name="Brinkac L.M."/>
            <person name="Daugherty S.C."/>
            <person name="Davidsen T.D."/>
            <person name="DeBoy R.T."/>
            <person name="Dimitrov G."/>
            <person name="Dodson R.J."/>
            <person name="Durkin A.S."/>
            <person name="Gwinn M.L."/>
            <person name="Haft D.H."/>
            <person name="Khouri H.M."/>
            <person name="Kolonay J.F."/>
            <person name="Madupu R."/>
            <person name="Mohammoud Y."/>
            <person name="Nelson W.C."/>
            <person name="Radune D."/>
            <person name="Romero C.M."/>
            <person name="Sarria S."/>
            <person name="Selengut J."/>
            <person name="Shamblin C."/>
            <person name="Sullivan S.A."/>
            <person name="White O."/>
            <person name="Yu Y."/>
            <person name="Zafar N."/>
            <person name="Zhou L."/>
            <person name="Fraser C.M."/>
        </authorList>
    </citation>
    <scope>NUCLEOTIDE SEQUENCE [LARGE SCALE GENOMIC DNA]</scope>
    <source>
        <strain>ATCC 23344</strain>
    </source>
</reference>
<comment type="function">
    <text evidence="1">Endonuclease that specifically degrades the RNA of RNA-DNA hybrids.</text>
</comment>
<comment type="catalytic activity">
    <reaction evidence="1">
        <text>Endonucleolytic cleavage to 5'-phosphomonoester.</text>
        <dbReference type="EC" id="3.1.26.4"/>
    </reaction>
</comment>
<comment type="cofactor">
    <cofactor evidence="1">
        <name>Mn(2+)</name>
        <dbReference type="ChEBI" id="CHEBI:29035"/>
    </cofactor>
    <cofactor evidence="1">
        <name>Mg(2+)</name>
        <dbReference type="ChEBI" id="CHEBI:18420"/>
    </cofactor>
    <text evidence="1">Manganese or magnesium. Binds 1 divalent metal ion per monomer in the absence of substrate. May bind a second metal ion after substrate binding.</text>
</comment>
<comment type="subcellular location">
    <subcellularLocation>
        <location evidence="1">Cytoplasm</location>
    </subcellularLocation>
</comment>
<comment type="similarity">
    <text evidence="1">Belongs to the RNase HII family.</text>
</comment>